<organism>
    <name type="scientific">Euglena gracilis</name>
    <dbReference type="NCBI Taxonomy" id="3039"/>
    <lineage>
        <taxon>Eukaryota</taxon>
        <taxon>Discoba</taxon>
        <taxon>Euglenozoa</taxon>
        <taxon>Euglenida</taxon>
        <taxon>Spirocuta</taxon>
        <taxon>Euglenophyceae</taxon>
        <taxon>Euglenales</taxon>
        <taxon>Euglenaceae</taxon>
        <taxon>Euglena</taxon>
    </lineage>
</organism>
<gene>
    <name evidence="8" type="primary">pacA</name>
</gene>
<accession>Q8S9F2</accession>
<accession>Q2P9N1</accession>
<comment type="function">
    <text evidence="4">Acts as a blue light photoreceptor for the step-up photophobic response. Mediates photoavoidance.</text>
</comment>
<comment type="catalytic activity">
    <reaction evidence="4">
        <text>ATP = 3',5'-cyclic AMP + diphosphate</text>
        <dbReference type="Rhea" id="RHEA:15389"/>
        <dbReference type="ChEBI" id="CHEBI:30616"/>
        <dbReference type="ChEBI" id="CHEBI:33019"/>
        <dbReference type="ChEBI" id="CHEBI:58165"/>
        <dbReference type="EC" id="4.6.1.1"/>
    </reaction>
</comment>
<comment type="cofactor">
    <cofactor evidence="4">
        <name>FAD</name>
        <dbReference type="ChEBI" id="CHEBI:57692"/>
    </cofactor>
</comment>
<comment type="activity regulation">
    <text evidence="4">Activity increased by up to 80-fold under blue light.</text>
</comment>
<comment type="biophysicochemical properties">
    <kinetics>
        <KM evidence="4">0.5 uM for ATP</KM>
        <Vmax evidence="4">3.5 nmol/min/mg enzyme</Vmax>
    </kinetics>
</comment>
<comment type="subunit">
    <text evidence="4">Heterotetramer of two alpha and two beta subunits.</text>
</comment>
<comment type="subcellular location">
    <subcellularLocation>
        <location evidence="4 5">Cell projection</location>
        <location evidence="4 5">Cilium</location>
        <location evidence="4 5">Flagellum</location>
    </subcellularLocation>
    <text>Paraflagellar body, flagellum and paraxonemal bodies (PABs).</text>
</comment>
<comment type="miscellaneous">
    <text evidence="5">The 1224-5/9F strain is deficient in phototaxis. It is not known if this is due to defective adenylate cyclase activity or defective BLUF domains in the beta subunit of this protein.</text>
</comment>
<comment type="similarity">
    <text evidence="2">Belongs to the adenylyl cyclase class-4/guanylyl cyclase family.</text>
</comment>
<reference evidence="6 7" key="1">
    <citation type="journal article" date="2002" name="Nature">
        <title>A blue-light-activated adenylyl cyclase mediates photoavoidance in Euglena gracilis.</title>
        <authorList>
            <person name="Iseki M."/>
            <person name="Matsunaga S."/>
            <person name="Murakami A."/>
            <person name="Ohno K."/>
            <person name="Shiga K."/>
            <person name="Yoshida K."/>
            <person name="Sugai M."/>
            <person name="Takahashi T."/>
            <person name="Hori T."/>
            <person name="Watanabe M."/>
        </authorList>
    </citation>
    <scope>NUCLEOTIDE SEQUENCE [MRNA]</scope>
    <scope>PROTEIN SEQUENCE OF 1-31</scope>
    <scope>FUNCTION</scope>
    <scope>CATALYTIC ACTIVITY</scope>
    <scope>COFACTOR</scope>
    <scope>ACTIVITY REGULATION</scope>
    <scope>BIOPHYSICOCHEMICAL PROPERTIES</scope>
    <scope>SUBUNIT</scope>
    <scope>SUBCELLULAR LOCATION</scope>
    <source>
        <strain evidence="7">Z / UTEX 753</strain>
    </source>
</reference>
<reference evidence="6 8" key="2">
    <citation type="journal article" date="2005" name="Photochem. Photobiol. Sci.">
        <title>Photoactivated adenylyl cyclase (PAC) genes in the flagellate Euglena gracilis mutant strains.</title>
        <authorList>
            <person name="Ntefidou M."/>
            <person name="Haeder D.-P."/>
        </authorList>
    </citation>
    <scope>NUCLEOTIDE SEQUENCE [MRNA]</scope>
    <scope>SUBCELLULAR LOCATION</scope>
    <source>
        <strain>SAG 1224-5/9F</strain>
    </source>
</reference>
<feature type="chain" id="PRO_0000195717" description="Photoactivated adenylate cyclase subunit alpha">
    <location>
        <begin position="1"/>
        <end position="1019"/>
    </location>
</feature>
<feature type="domain" description="BLUF 1" evidence="1">
    <location>
        <begin position="55"/>
        <end position="148"/>
    </location>
</feature>
<feature type="domain" description="Guanylate cyclase 1" evidence="2">
    <location>
        <begin position="204"/>
        <end position="332"/>
    </location>
</feature>
<feature type="domain" description="BLUF 2" evidence="1">
    <location>
        <begin position="467"/>
        <end position="559"/>
    </location>
</feature>
<feature type="domain" description="Guanylate cyclase 2" evidence="2">
    <location>
        <begin position="615"/>
        <end position="744"/>
    </location>
</feature>
<feature type="region of interest" description="Disordered" evidence="3">
    <location>
        <begin position="822"/>
        <end position="861"/>
    </location>
</feature>
<feature type="compositionally biased region" description="Low complexity" evidence="3">
    <location>
        <begin position="825"/>
        <end position="839"/>
    </location>
</feature>
<feature type="compositionally biased region" description="Polar residues" evidence="3">
    <location>
        <begin position="846"/>
        <end position="855"/>
    </location>
</feature>
<protein>
    <recommendedName>
        <fullName>Photoactivated adenylate cyclase subunit alpha</fullName>
        <ecNumber>4.6.1.1</ecNumber>
    </recommendedName>
    <alternativeName>
        <fullName>Photoactivated adenylyl cyclase subunit alpha</fullName>
    </alternativeName>
</protein>
<sequence length="1019" mass="111990">MYILVWKEGQQIRTFQDLEECGQFQTASNITDGQIFSINVTPTMSKGGETGETQLRRLMYLSASTEPEKCNAEYLADMAHVATLRNKQIGVSGFLLYSSPFFFQVIEGTDEDLDFLFAKISADPRHERCIVLANGPCTGRMYGEWHMKDSHIDNITKHPAIKTILFQIARSFSSMWSYLPKNAANMLLLGKNPNKQAPEPMSVVVTFIYLVEFSSILAHPGLTEQCADILAAFVDACVRNVEGTGGQVAKFITGICMAYWPINRAEDALVGLQQLSEDLAELRSQQPPGSALSLIYSRCGVHYGRALLCNAGFRKADFTLLGDCINTASRITSLSVKLKVPLLLSFEVRCLLGDEMREELESSGLHKVKGRDKPVQVYQFNAPELDSAMVRAKIEQFNPGRYRALCPVKPYESLHPAQRPPIFDDTPRENQPKLSQVQRRDSLVDRLSLIAKLAFPSSMMAGGEGQLITLTYISQAAHPMSRLDLASIQRIAFARNESSNITGSLLYVSGLFVQTLEGPKGAVVSLYLKIRQDKRHKDVVAVFMAPIDERVYGSPLDMTSATEEMLATFPPLQDVLSQLAKSFISLETYVPSTVVRYLTAGNNPRNLQPVSVEVVMLATDICSFTPLSEKCSLTEVWTICNTFIDACTSAICNEGGEVIKLIGDCVTAYFPPTGADNAVHACQEIVSFCAQLRDAFHDVLDCRSVVACGVGLDFGQVIMAQCGSLGMTEFVVAGEVSARVMEVEALTREAGRAIVITEPVADRLSPKLRDTGIVPCQEGVDGVPCYGILGPEWELDVATIKKNIYGFHDARALAAMKKVDDGTNAPGRGAPAGGIPSSPKVRPPGRTNSVSSYTPDPNEALDPRMAESVFLDMCHQRGDTANNSIAVKLRQAANDDRLDLGRMLQGPHELMPVMQAIKHLTNLRMLNMSDNFVDDNNVGELVESCIPMRSLQVLDLSNNPGLTKVIALKRLIKHNTQVREILLNGTRIAPTEQRKLQSSMNVNRLCASTDLKGSHKYEH</sequence>
<dbReference type="EC" id="4.6.1.1"/>
<dbReference type="EMBL" id="AB031225">
    <property type="protein sequence ID" value="BAB85619.1"/>
    <property type="molecule type" value="mRNA"/>
</dbReference>
<dbReference type="EMBL" id="AM181334">
    <property type="protein sequence ID" value="CAJ57393.1"/>
    <property type="molecule type" value="mRNA"/>
</dbReference>
<dbReference type="SMR" id="Q8S9F2"/>
<dbReference type="BRENDA" id="4.6.1.1">
    <property type="organism ID" value="2197"/>
</dbReference>
<dbReference type="SABIO-RK" id="Q8S9F2"/>
<dbReference type="GO" id="GO:0031514">
    <property type="term" value="C:motile cilium"/>
    <property type="evidence" value="ECO:0000314"/>
    <property type="project" value="UniProtKB"/>
</dbReference>
<dbReference type="GO" id="GO:0004016">
    <property type="term" value="F:adenylate cyclase activity"/>
    <property type="evidence" value="ECO:0000314"/>
    <property type="project" value="UniProtKB"/>
</dbReference>
<dbReference type="GO" id="GO:0005524">
    <property type="term" value="F:ATP binding"/>
    <property type="evidence" value="ECO:0007669"/>
    <property type="project" value="UniProtKB-KW"/>
</dbReference>
<dbReference type="GO" id="GO:0009882">
    <property type="term" value="F:blue light photoreceptor activity"/>
    <property type="evidence" value="ECO:0007669"/>
    <property type="project" value="InterPro"/>
</dbReference>
<dbReference type="GO" id="GO:0071949">
    <property type="term" value="F:FAD binding"/>
    <property type="evidence" value="ECO:0007669"/>
    <property type="project" value="InterPro"/>
</dbReference>
<dbReference type="GO" id="GO:0009881">
    <property type="term" value="F:photoreceptor activity"/>
    <property type="evidence" value="ECO:0000314"/>
    <property type="project" value="UniProtKB"/>
</dbReference>
<dbReference type="GO" id="GO:0006171">
    <property type="term" value="P:cAMP biosynthetic process"/>
    <property type="evidence" value="ECO:0007669"/>
    <property type="project" value="UniProtKB-KW"/>
</dbReference>
<dbReference type="CDD" id="cd07302">
    <property type="entry name" value="CHD"/>
    <property type="match status" value="2"/>
</dbReference>
<dbReference type="FunFam" id="3.30.70.1230:FF:000065">
    <property type="entry name" value="Photoactivated adenylate cyclase subunit alpha-like protein ST"/>
    <property type="match status" value="1"/>
</dbReference>
<dbReference type="FunFam" id="3.30.70.100:FF:000061">
    <property type="entry name" value="Photoactivated adenylate cyclase subunit beta-like protein 1224-5/1F"/>
    <property type="match status" value="1"/>
</dbReference>
<dbReference type="FunFam" id="3.30.70.1230:FF:000058">
    <property type="entry name" value="Photoactivated adenylate cyclase subunit beta-like protein FB"/>
    <property type="match status" value="1"/>
</dbReference>
<dbReference type="FunFam" id="3.30.70.100:FF:000064">
    <property type="entry name" value="Photoactivated adenylate cyclase subunit beta-like protein ST"/>
    <property type="match status" value="1"/>
</dbReference>
<dbReference type="Gene3D" id="3.30.70.100">
    <property type="match status" value="2"/>
</dbReference>
<dbReference type="Gene3D" id="3.30.70.1230">
    <property type="entry name" value="Nucleotide cyclase"/>
    <property type="match status" value="2"/>
</dbReference>
<dbReference type="Gene3D" id="3.80.10.10">
    <property type="entry name" value="Ribonuclease Inhibitor"/>
    <property type="match status" value="1"/>
</dbReference>
<dbReference type="InterPro" id="IPR001054">
    <property type="entry name" value="A/G_cyclase"/>
</dbReference>
<dbReference type="InterPro" id="IPR036046">
    <property type="entry name" value="Acylphosphatase-like_dom_sf"/>
</dbReference>
<dbReference type="InterPro" id="IPR050697">
    <property type="entry name" value="Adenylyl/Guanylyl_Cyclase_3/4"/>
</dbReference>
<dbReference type="InterPro" id="IPR007024">
    <property type="entry name" value="BLUF_domain"/>
</dbReference>
<dbReference type="InterPro" id="IPR032675">
    <property type="entry name" value="LRR_dom_sf"/>
</dbReference>
<dbReference type="InterPro" id="IPR029787">
    <property type="entry name" value="Nucleotide_cyclase"/>
</dbReference>
<dbReference type="PANTHER" id="PTHR43081:SF1">
    <property type="entry name" value="ADENYLATE CYCLASE, TERMINAL-DIFFERENTIATION SPECIFIC"/>
    <property type="match status" value="1"/>
</dbReference>
<dbReference type="PANTHER" id="PTHR43081">
    <property type="entry name" value="ADENYLATE CYCLASE, TERMINAL-DIFFERENTIATION SPECIFIC-RELATED"/>
    <property type="match status" value="1"/>
</dbReference>
<dbReference type="Pfam" id="PF04940">
    <property type="entry name" value="BLUF"/>
    <property type="match status" value="2"/>
</dbReference>
<dbReference type="Pfam" id="PF00211">
    <property type="entry name" value="Guanylate_cyc"/>
    <property type="match status" value="2"/>
</dbReference>
<dbReference type="SMART" id="SM01034">
    <property type="entry name" value="BLUF"/>
    <property type="match status" value="2"/>
</dbReference>
<dbReference type="SUPFAM" id="SSF54975">
    <property type="entry name" value="Acylphosphatase/BLUF domain-like"/>
    <property type="match status" value="2"/>
</dbReference>
<dbReference type="SUPFAM" id="SSF55073">
    <property type="entry name" value="Nucleotide cyclase"/>
    <property type="match status" value="2"/>
</dbReference>
<dbReference type="SUPFAM" id="SSF52047">
    <property type="entry name" value="RNI-like"/>
    <property type="match status" value="1"/>
</dbReference>
<dbReference type="PROSITE" id="PS50925">
    <property type="entry name" value="BLUF"/>
    <property type="match status" value="2"/>
</dbReference>
<dbReference type="PROSITE" id="PS50125">
    <property type="entry name" value="GUANYLATE_CYCLASE_2"/>
    <property type="match status" value="2"/>
</dbReference>
<evidence type="ECO:0000255" key="1">
    <source>
        <dbReference type="PROSITE-ProRule" id="PRU00030"/>
    </source>
</evidence>
<evidence type="ECO:0000255" key="2">
    <source>
        <dbReference type="PROSITE-ProRule" id="PRU00099"/>
    </source>
</evidence>
<evidence type="ECO:0000256" key="3">
    <source>
        <dbReference type="SAM" id="MobiDB-lite"/>
    </source>
</evidence>
<evidence type="ECO:0000269" key="4">
    <source>
    </source>
</evidence>
<evidence type="ECO:0000269" key="5">
    <source>
    </source>
</evidence>
<evidence type="ECO:0000305" key="6"/>
<evidence type="ECO:0000312" key="7">
    <source>
        <dbReference type="EMBL" id="BAB85619.1"/>
    </source>
</evidence>
<evidence type="ECO:0000312" key="8">
    <source>
        <dbReference type="EMBL" id="CAJ57393.1"/>
    </source>
</evidence>
<proteinExistence type="evidence at protein level"/>
<name>PCYAA_EUGGR</name>
<keyword id="KW-0067">ATP-binding</keyword>
<keyword id="KW-0115">cAMP biosynthesis</keyword>
<keyword id="KW-0966">Cell projection</keyword>
<keyword id="KW-0157">Chromophore</keyword>
<keyword id="KW-0969">Cilium</keyword>
<keyword id="KW-0903">Direct protein sequencing</keyword>
<keyword id="KW-0274">FAD</keyword>
<keyword id="KW-0282">Flagellum</keyword>
<keyword id="KW-0285">Flavoprotein</keyword>
<keyword id="KW-0456">Lyase</keyword>
<keyword id="KW-0547">Nucleotide-binding</keyword>
<keyword id="KW-0600">Photoreceptor protein</keyword>
<keyword id="KW-0675">Receptor</keyword>
<keyword id="KW-0677">Repeat</keyword>
<keyword id="KW-0716">Sensory transduction</keyword>